<proteinExistence type="inferred from homology"/>
<accession>C3PMI9</accession>
<evidence type="ECO:0000255" key="1">
    <source>
        <dbReference type="HAMAP-Rule" id="MF_00121"/>
    </source>
</evidence>
<protein>
    <recommendedName>
        <fullName evidence="1">Aspartyl/glutamyl-tRNA(Asn/Gln) amidotransferase subunit B</fullName>
        <shortName evidence="1">Asp/Glu-ADT subunit B</shortName>
        <ecNumber evidence="1">6.3.5.-</ecNumber>
    </recommendedName>
</protein>
<dbReference type="EC" id="6.3.5.-" evidence="1"/>
<dbReference type="EMBL" id="CP001612">
    <property type="protein sequence ID" value="ACP53149.1"/>
    <property type="molecule type" value="Genomic_DNA"/>
</dbReference>
<dbReference type="RefSeq" id="WP_012719419.1">
    <property type="nucleotide sequence ID" value="NC_012633.1"/>
</dbReference>
<dbReference type="SMR" id="C3PMI9"/>
<dbReference type="KEGG" id="raf:RAF_ORF0182"/>
<dbReference type="HOGENOM" id="CLU_019240_0_0_5"/>
<dbReference type="Proteomes" id="UP000002305">
    <property type="component" value="Chromosome"/>
</dbReference>
<dbReference type="GO" id="GO:0050566">
    <property type="term" value="F:asparaginyl-tRNA synthase (glutamine-hydrolyzing) activity"/>
    <property type="evidence" value="ECO:0007669"/>
    <property type="project" value="RHEA"/>
</dbReference>
<dbReference type="GO" id="GO:0005524">
    <property type="term" value="F:ATP binding"/>
    <property type="evidence" value="ECO:0007669"/>
    <property type="project" value="UniProtKB-KW"/>
</dbReference>
<dbReference type="GO" id="GO:0050567">
    <property type="term" value="F:glutaminyl-tRNA synthase (glutamine-hydrolyzing) activity"/>
    <property type="evidence" value="ECO:0007669"/>
    <property type="project" value="UniProtKB-UniRule"/>
</dbReference>
<dbReference type="GO" id="GO:0070681">
    <property type="term" value="P:glutaminyl-tRNAGln biosynthesis via transamidation"/>
    <property type="evidence" value="ECO:0007669"/>
    <property type="project" value="TreeGrafter"/>
</dbReference>
<dbReference type="GO" id="GO:0006412">
    <property type="term" value="P:translation"/>
    <property type="evidence" value="ECO:0007669"/>
    <property type="project" value="UniProtKB-UniRule"/>
</dbReference>
<dbReference type="FunFam" id="1.10.10.410:FF:000001">
    <property type="entry name" value="Aspartyl/glutamyl-tRNA(Asn/Gln) amidotransferase subunit B"/>
    <property type="match status" value="1"/>
</dbReference>
<dbReference type="Gene3D" id="1.10.10.410">
    <property type="match status" value="1"/>
</dbReference>
<dbReference type="Gene3D" id="1.10.150.380">
    <property type="entry name" value="GatB domain, N-terminal subdomain"/>
    <property type="match status" value="1"/>
</dbReference>
<dbReference type="HAMAP" id="MF_00121">
    <property type="entry name" value="GatB"/>
    <property type="match status" value="1"/>
</dbReference>
<dbReference type="InterPro" id="IPR017959">
    <property type="entry name" value="Asn/Gln-tRNA_amidoTrfase_suB/E"/>
</dbReference>
<dbReference type="InterPro" id="IPR006075">
    <property type="entry name" value="Asn/Gln-tRNA_Trfase_suB/E_cat"/>
</dbReference>
<dbReference type="InterPro" id="IPR018027">
    <property type="entry name" value="Asn/Gln_amidotransferase"/>
</dbReference>
<dbReference type="InterPro" id="IPR003789">
    <property type="entry name" value="Asn/Gln_tRNA_amidoTrase-B-like"/>
</dbReference>
<dbReference type="InterPro" id="IPR004413">
    <property type="entry name" value="GatB"/>
</dbReference>
<dbReference type="InterPro" id="IPR042114">
    <property type="entry name" value="GatB_C_1"/>
</dbReference>
<dbReference type="InterPro" id="IPR023168">
    <property type="entry name" value="GatB_Yqey_C_2"/>
</dbReference>
<dbReference type="InterPro" id="IPR017958">
    <property type="entry name" value="Gln-tRNA_amidoTrfase_suB_CS"/>
</dbReference>
<dbReference type="InterPro" id="IPR014746">
    <property type="entry name" value="Gln_synth/guanido_kin_cat_dom"/>
</dbReference>
<dbReference type="NCBIfam" id="TIGR00133">
    <property type="entry name" value="gatB"/>
    <property type="match status" value="1"/>
</dbReference>
<dbReference type="NCBIfam" id="NF004012">
    <property type="entry name" value="PRK05477.1-2"/>
    <property type="match status" value="1"/>
</dbReference>
<dbReference type="NCBIfam" id="NF004014">
    <property type="entry name" value="PRK05477.1-4"/>
    <property type="match status" value="1"/>
</dbReference>
<dbReference type="NCBIfam" id="NF004015">
    <property type="entry name" value="PRK05477.1-5"/>
    <property type="match status" value="1"/>
</dbReference>
<dbReference type="PANTHER" id="PTHR11659">
    <property type="entry name" value="GLUTAMYL-TRNA GLN AMIDOTRANSFERASE SUBUNIT B MITOCHONDRIAL AND PROKARYOTIC PET112-RELATED"/>
    <property type="match status" value="1"/>
</dbReference>
<dbReference type="PANTHER" id="PTHR11659:SF0">
    <property type="entry name" value="GLUTAMYL-TRNA(GLN) AMIDOTRANSFERASE SUBUNIT B, MITOCHONDRIAL"/>
    <property type="match status" value="1"/>
</dbReference>
<dbReference type="Pfam" id="PF02934">
    <property type="entry name" value="GatB_N"/>
    <property type="match status" value="1"/>
</dbReference>
<dbReference type="Pfam" id="PF02637">
    <property type="entry name" value="GatB_Yqey"/>
    <property type="match status" value="1"/>
</dbReference>
<dbReference type="SMART" id="SM00845">
    <property type="entry name" value="GatB_Yqey"/>
    <property type="match status" value="1"/>
</dbReference>
<dbReference type="SUPFAM" id="SSF89095">
    <property type="entry name" value="GatB/YqeY motif"/>
    <property type="match status" value="1"/>
</dbReference>
<dbReference type="SUPFAM" id="SSF55931">
    <property type="entry name" value="Glutamine synthetase/guanido kinase"/>
    <property type="match status" value="1"/>
</dbReference>
<dbReference type="PROSITE" id="PS01234">
    <property type="entry name" value="GATB"/>
    <property type="match status" value="1"/>
</dbReference>
<comment type="function">
    <text evidence="1">Allows the formation of correctly charged Asn-tRNA(Asn) or Gln-tRNA(Gln) through the transamidation of misacylated Asp-tRNA(Asn) or Glu-tRNA(Gln) in organisms which lack either or both of asparaginyl-tRNA or glutaminyl-tRNA synthetases. The reaction takes place in the presence of glutamine and ATP through an activated phospho-Asp-tRNA(Asn) or phospho-Glu-tRNA(Gln).</text>
</comment>
<comment type="catalytic activity">
    <reaction evidence="1">
        <text>L-glutamyl-tRNA(Gln) + L-glutamine + ATP + H2O = L-glutaminyl-tRNA(Gln) + L-glutamate + ADP + phosphate + H(+)</text>
        <dbReference type="Rhea" id="RHEA:17521"/>
        <dbReference type="Rhea" id="RHEA-COMP:9681"/>
        <dbReference type="Rhea" id="RHEA-COMP:9684"/>
        <dbReference type="ChEBI" id="CHEBI:15377"/>
        <dbReference type="ChEBI" id="CHEBI:15378"/>
        <dbReference type="ChEBI" id="CHEBI:29985"/>
        <dbReference type="ChEBI" id="CHEBI:30616"/>
        <dbReference type="ChEBI" id="CHEBI:43474"/>
        <dbReference type="ChEBI" id="CHEBI:58359"/>
        <dbReference type="ChEBI" id="CHEBI:78520"/>
        <dbReference type="ChEBI" id="CHEBI:78521"/>
        <dbReference type="ChEBI" id="CHEBI:456216"/>
    </reaction>
</comment>
<comment type="catalytic activity">
    <reaction evidence="1">
        <text>L-aspartyl-tRNA(Asn) + L-glutamine + ATP + H2O = L-asparaginyl-tRNA(Asn) + L-glutamate + ADP + phosphate + 2 H(+)</text>
        <dbReference type="Rhea" id="RHEA:14513"/>
        <dbReference type="Rhea" id="RHEA-COMP:9674"/>
        <dbReference type="Rhea" id="RHEA-COMP:9677"/>
        <dbReference type="ChEBI" id="CHEBI:15377"/>
        <dbReference type="ChEBI" id="CHEBI:15378"/>
        <dbReference type="ChEBI" id="CHEBI:29985"/>
        <dbReference type="ChEBI" id="CHEBI:30616"/>
        <dbReference type="ChEBI" id="CHEBI:43474"/>
        <dbReference type="ChEBI" id="CHEBI:58359"/>
        <dbReference type="ChEBI" id="CHEBI:78515"/>
        <dbReference type="ChEBI" id="CHEBI:78516"/>
        <dbReference type="ChEBI" id="CHEBI:456216"/>
    </reaction>
</comment>
<comment type="subunit">
    <text evidence="1">Heterotrimer of A, B and C subunits.</text>
</comment>
<comment type="similarity">
    <text evidence="1">Belongs to the GatB/GatE family. GatB subfamily.</text>
</comment>
<sequence>MAYIEGNTGKWEYVIGLEIHAQISSKSKLFSGSSTIFAANPNSQVSYVDAAMPGMLPVLNKHCVHQAIKTGLGLKAKINKYSVFDRKNYFYADLPQGYQISQFYYPIVQNGTMEIPTSTGDLKTIRINRLHLEQDAGKSMHDQSPHYSFIDLNRAGIGLMEIVTEPDISSPEEAAEFVKKLRNLLRYIGSCDGDMEKGSMRCDANISVRRSGEPLGTRCEIKNINSIRNIIKAIEFEAKRQVDLLESGEEIIQETRLFNADSGETRTMRLKEEALDYRYFPDPDLLPLVISDELINELKANLPELPDQKIEKYTKEFSLSKYDAEVIVADESVAEYFEKAANECNPKMLTNWLTSELFGQLNKASIGINECKITPSNFAKLVKLIENDTISGKIAKTVFEIMFETGKAPDKIVEEKGLVQVSDNNVLNTVIDEVIAENPESVEGYRSGKDKLFGFFVGQVMKKTGGKANPTLVNQLLKEKLSS</sequence>
<feature type="chain" id="PRO_1000203058" description="Aspartyl/glutamyl-tRNA(Asn/Gln) amidotransferase subunit B">
    <location>
        <begin position="1"/>
        <end position="483"/>
    </location>
</feature>
<organism>
    <name type="scientific">Rickettsia africae (strain ESF-5)</name>
    <dbReference type="NCBI Taxonomy" id="347255"/>
    <lineage>
        <taxon>Bacteria</taxon>
        <taxon>Pseudomonadati</taxon>
        <taxon>Pseudomonadota</taxon>
        <taxon>Alphaproteobacteria</taxon>
        <taxon>Rickettsiales</taxon>
        <taxon>Rickettsiaceae</taxon>
        <taxon>Rickettsieae</taxon>
        <taxon>Rickettsia</taxon>
        <taxon>spotted fever group</taxon>
    </lineage>
</organism>
<gene>
    <name evidence="1" type="primary">gatB</name>
    <name type="ordered locus">RAF_ORF0182</name>
</gene>
<name>GATB_RICAE</name>
<keyword id="KW-0067">ATP-binding</keyword>
<keyword id="KW-0436">Ligase</keyword>
<keyword id="KW-0547">Nucleotide-binding</keyword>
<keyword id="KW-0648">Protein biosynthesis</keyword>
<reference key="1">
    <citation type="journal article" date="2009" name="BMC Genomics">
        <title>Analysis of the Rickettsia africae genome reveals that virulence acquisition in Rickettsia species may be explained by genome reduction.</title>
        <authorList>
            <person name="Fournier P.-E."/>
            <person name="El Karkouri K."/>
            <person name="Leroy Q."/>
            <person name="Robert C."/>
            <person name="Giumelli B."/>
            <person name="Renesto P."/>
            <person name="Socolovschi C."/>
            <person name="Parola P."/>
            <person name="Audic S."/>
            <person name="Raoult D."/>
        </authorList>
    </citation>
    <scope>NUCLEOTIDE SEQUENCE [LARGE SCALE GENOMIC DNA]</scope>
    <source>
        <strain>ESF-5</strain>
    </source>
</reference>